<accession>A7H8A3</accession>
<dbReference type="EC" id="3.6.1.7"/>
<dbReference type="EMBL" id="CP000769">
    <property type="protein sequence ID" value="ABS24949.1"/>
    <property type="molecule type" value="Genomic_DNA"/>
</dbReference>
<dbReference type="RefSeq" id="WP_011985055.1">
    <property type="nucleotide sequence ID" value="NC_009675.1"/>
</dbReference>
<dbReference type="SMR" id="A7H8A3"/>
<dbReference type="STRING" id="404589.Anae109_0736"/>
<dbReference type="KEGG" id="afw:Anae109_0736"/>
<dbReference type="eggNOG" id="COG1254">
    <property type="taxonomic scope" value="Bacteria"/>
</dbReference>
<dbReference type="HOGENOM" id="CLU_141932_1_0_7"/>
<dbReference type="OrthoDB" id="5295388at2"/>
<dbReference type="Proteomes" id="UP000006382">
    <property type="component" value="Chromosome"/>
</dbReference>
<dbReference type="GO" id="GO:0003998">
    <property type="term" value="F:acylphosphatase activity"/>
    <property type="evidence" value="ECO:0007669"/>
    <property type="project" value="UniProtKB-EC"/>
</dbReference>
<dbReference type="Gene3D" id="3.30.70.100">
    <property type="match status" value="1"/>
</dbReference>
<dbReference type="InterPro" id="IPR020456">
    <property type="entry name" value="Acylphosphatase"/>
</dbReference>
<dbReference type="InterPro" id="IPR001792">
    <property type="entry name" value="Acylphosphatase-like_dom"/>
</dbReference>
<dbReference type="InterPro" id="IPR036046">
    <property type="entry name" value="Acylphosphatase-like_dom_sf"/>
</dbReference>
<dbReference type="InterPro" id="IPR017968">
    <property type="entry name" value="Acylphosphatase_CS"/>
</dbReference>
<dbReference type="NCBIfam" id="NF011013">
    <property type="entry name" value="PRK14441.1"/>
    <property type="match status" value="1"/>
</dbReference>
<dbReference type="PANTHER" id="PTHR47268">
    <property type="entry name" value="ACYLPHOSPHATASE"/>
    <property type="match status" value="1"/>
</dbReference>
<dbReference type="PANTHER" id="PTHR47268:SF4">
    <property type="entry name" value="ACYLPHOSPHATASE"/>
    <property type="match status" value="1"/>
</dbReference>
<dbReference type="Pfam" id="PF00708">
    <property type="entry name" value="Acylphosphatase"/>
    <property type="match status" value="1"/>
</dbReference>
<dbReference type="PRINTS" id="PR00112">
    <property type="entry name" value="ACYLPHPHTASE"/>
</dbReference>
<dbReference type="SUPFAM" id="SSF54975">
    <property type="entry name" value="Acylphosphatase/BLUF domain-like"/>
    <property type="match status" value="1"/>
</dbReference>
<dbReference type="PROSITE" id="PS00150">
    <property type="entry name" value="ACYLPHOSPHATASE_1"/>
    <property type="match status" value="1"/>
</dbReference>
<dbReference type="PROSITE" id="PS00151">
    <property type="entry name" value="ACYLPHOSPHATASE_2"/>
    <property type="match status" value="1"/>
</dbReference>
<dbReference type="PROSITE" id="PS51160">
    <property type="entry name" value="ACYLPHOSPHATASE_3"/>
    <property type="match status" value="1"/>
</dbReference>
<reference key="1">
    <citation type="journal article" date="2015" name="Genome Announc.">
        <title>Complete genome sequence of Anaeromyxobacter sp. Fw109-5, an anaerobic, metal-reducing bacterium isolated from a contaminated subsurface environment.</title>
        <authorList>
            <person name="Hwang C."/>
            <person name="Copeland A."/>
            <person name="Lucas S."/>
            <person name="Lapidus A."/>
            <person name="Barry K."/>
            <person name="Glavina Del Rio T."/>
            <person name="Dalin E."/>
            <person name="Tice H."/>
            <person name="Pitluck S."/>
            <person name="Sims D."/>
            <person name="Brettin T."/>
            <person name="Bruce D.C."/>
            <person name="Detter J.C."/>
            <person name="Han C.S."/>
            <person name="Schmutz J."/>
            <person name="Larimer F.W."/>
            <person name="Land M.L."/>
            <person name="Hauser L.J."/>
            <person name="Kyrpides N."/>
            <person name="Lykidis A."/>
            <person name="Richardson P."/>
            <person name="Belieav A."/>
            <person name="Sanford R.A."/>
            <person name="Loeffler F.E."/>
            <person name="Fields M.W."/>
        </authorList>
    </citation>
    <scope>NUCLEOTIDE SEQUENCE [LARGE SCALE GENOMIC DNA]</scope>
    <source>
        <strain>Fw109-5</strain>
    </source>
</reference>
<proteinExistence type="inferred from homology"/>
<sequence length="93" mass="9937">MAELARAHILVSGEVQGVSFRAAAVDEARRLGVRGWVRNVADGRVEAEAEGERAKVEALVRWCGRGPPAARVADVQVSWGAYGGDLGPFSVRH</sequence>
<evidence type="ECO:0000255" key="1">
    <source>
        <dbReference type="PROSITE-ProRule" id="PRU00520"/>
    </source>
</evidence>
<evidence type="ECO:0000305" key="2"/>
<name>ACYP_ANADF</name>
<gene>
    <name type="primary">acyP</name>
    <name type="ordered locus">Anae109_0736</name>
</gene>
<organism>
    <name type="scientific">Anaeromyxobacter sp. (strain Fw109-5)</name>
    <dbReference type="NCBI Taxonomy" id="404589"/>
    <lineage>
        <taxon>Bacteria</taxon>
        <taxon>Pseudomonadati</taxon>
        <taxon>Myxococcota</taxon>
        <taxon>Myxococcia</taxon>
        <taxon>Myxococcales</taxon>
        <taxon>Cystobacterineae</taxon>
        <taxon>Anaeromyxobacteraceae</taxon>
        <taxon>Anaeromyxobacter</taxon>
    </lineage>
</organism>
<feature type="chain" id="PRO_0000326651" description="Acylphosphatase">
    <location>
        <begin position="1"/>
        <end position="93"/>
    </location>
</feature>
<feature type="domain" description="Acylphosphatase-like" evidence="1">
    <location>
        <begin position="6"/>
        <end position="93"/>
    </location>
</feature>
<feature type="active site" evidence="1">
    <location>
        <position position="21"/>
    </location>
</feature>
<feature type="active site" evidence="1">
    <location>
        <position position="39"/>
    </location>
</feature>
<comment type="catalytic activity">
    <reaction>
        <text>an acyl phosphate + H2O = a carboxylate + phosphate + H(+)</text>
        <dbReference type="Rhea" id="RHEA:14965"/>
        <dbReference type="ChEBI" id="CHEBI:15377"/>
        <dbReference type="ChEBI" id="CHEBI:15378"/>
        <dbReference type="ChEBI" id="CHEBI:29067"/>
        <dbReference type="ChEBI" id="CHEBI:43474"/>
        <dbReference type="ChEBI" id="CHEBI:59918"/>
        <dbReference type="EC" id="3.6.1.7"/>
    </reaction>
</comment>
<comment type="similarity">
    <text evidence="2">Belongs to the acylphosphatase family.</text>
</comment>
<protein>
    <recommendedName>
        <fullName>Acylphosphatase</fullName>
        <ecNumber>3.6.1.7</ecNumber>
    </recommendedName>
    <alternativeName>
        <fullName>Acylphosphate phosphohydrolase</fullName>
    </alternativeName>
</protein>
<keyword id="KW-0378">Hydrolase</keyword>
<keyword id="KW-1185">Reference proteome</keyword>